<feature type="signal peptide" evidence="1">
    <location>
        <begin position="1"/>
        <end position="21"/>
    </location>
</feature>
<feature type="chain" id="PRO_1000190857" description="Outer-membrane lipoprotein LolB">
    <location>
        <begin position="22"/>
        <end position="207"/>
    </location>
</feature>
<feature type="lipid moiety-binding region" description="N-palmitoyl cysteine" evidence="1">
    <location>
        <position position="22"/>
    </location>
</feature>
<feature type="lipid moiety-binding region" description="S-diacylglycerol cysteine" evidence="1">
    <location>
        <position position="22"/>
    </location>
</feature>
<comment type="function">
    <text evidence="1">Plays a critical role in the incorporation of lipoproteins in the outer membrane after they are released by the LolA protein.</text>
</comment>
<comment type="subunit">
    <text evidence="1">Monomer.</text>
</comment>
<comment type="subcellular location">
    <subcellularLocation>
        <location evidence="1">Cell outer membrane</location>
        <topology evidence="1">Lipid-anchor</topology>
    </subcellularLocation>
</comment>
<comment type="similarity">
    <text evidence="1">Belongs to the LolB family.</text>
</comment>
<name>LOLB_ECO45</name>
<evidence type="ECO:0000255" key="1">
    <source>
        <dbReference type="HAMAP-Rule" id="MF_00233"/>
    </source>
</evidence>
<accession>B7MKB1</accession>
<sequence>MPLPDFRLIRLLPLAALVLTACSVTTPKGPGKSPDSPQWRQHQQDVRNLNQYQTRGAFAYISDQQKVYARFFWQQTGQDRYRLLLTNPLGSTELELNAQPGNVQLVDNKGQRYTSDDAEEMIGKLTGMPIPLNSLRQWILGLPGDATDYKLDDQYRLSEITYSQNGKNWKVVYGGYDTKTQPAMPANMELTDGGQRIKLKMDNWIVK</sequence>
<organism>
    <name type="scientific">Escherichia coli O45:K1 (strain S88 / ExPEC)</name>
    <dbReference type="NCBI Taxonomy" id="585035"/>
    <lineage>
        <taxon>Bacteria</taxon>
        <taxon>Pseudomonadati</taxon>
        <taxon>Pseudomonadota</taxon>
        <taxon>Gammaproteobacteria</taxon>
        <taxon>Enterobacterales</taxon>
        <taxon>Enterobacteriaceae</taxon>
        <taxon>Escherichia</taxon>
    </lineage>
</organism>
<proteinExistence type="inferred from homology"/>
<keyword id="KW-0998">Cell outer membrane</keyword>
<keyword id="KW-0143">Chaperone</keyword>
<keyword id="KW-0449">Lipoprotein</keyword>
<keyword id="KW-0472">Membrane</keyword>
<keyword id="KW-0564">Palmitate</keyword>
<keyword id="KW-0653">Protein transport</keyword>
<keyword id="KW-1185">Reference proteome</keyword>
<keyword id="KW-0732">Signal</keyword>
<keyword id="KW-0813">Transport</keyword>
<dbReference type="EMBL" id="CU928161">
    <property type="protein sequence ID" value="CAR02603.1"/>
    <property type="molecule type" value="Genomic_DNA"/>
</dbReference>
<dbReference type="RefSeq" id="WP_001130698.1">
    <property type="nucleotide sequence ID" value="NC_011742.1"/>
</dbReference>
<dbReference type="SMR" id="B7MKB1"/>
<dbReference type="KEGG" id="ecz:ECS88_1277"/>
<dbReference type="HOGENOM" id="CLU_092816_1_1_6"/>
<dbReference type="Proteomes" id="UP000000747">
    <property type="component" value="Chromosome"/>
</dbReference>
<dbReference type="GO" id="GO:0009279">
    <property type="term" value="C:cell outer membrane"/>
    <property type="evidence" value="ECO:0007669"/>
    <property type="project" value="UniProtKB-SubCell"/>
</dbReference>
<dbReference type="GO" id="GO:0044874">
    <property type="term" value="P:lipoprotein localization to outer membrane"/>
    <property type="evidence" value="ECO:0007669"/>
    <property type="project" value="UniProtKB-UniRule"/>
</dbReference>
<dbReference type="GO" id="GO:0015031">
    <property type="term" value="P:protein transport"/>
    <property type="evidence" value="ECO:0007669"/>
    <property type="project" value="UniProtKB-KW"/>
</dbReference>
<dbReference type="CDD" id="cd16326">
    <property type="entry name" value="LolB"/>
    <property type="match status" value="1"/>
</dbReference>
<dbReference type="FunFam" id="2.50.20.10:FF:000002">
    <property type="entry name" value="Outer-membrane lipoprotein LolB"/>
    <property type="match status" value="1"/>
</dbReference>
<dbReference type="Gene3D" id="2.50.20.10">
    <property type="entry name" value="Lipoprotein localisation LolA/LolB/LppX"/>
    <property type="match status" value="1"/>
</dbReference>
<dbReference type="HAMAP" id="MF_00233">
    <property type="entry name" value="LolB"/>
    <property type="match status" value="1"/>
</dbReference>
<dbReference type="InterPro" id="IPR029046">
    <property type="entry name" value="LolA/LolB/LppX"/>
</dbReference>
<dbReference type="InterPro" id="IPR004565">
    <property type="entry name" value="OM_lipoprot_LolB"/>
</dbReference>
<dbReference type="NCBIfam" id="TIGR00548">
    <property type="entry name" value="lolB"/>
    <property type="match status" value="1"/>
</dbReference>
<dbReference type="Pfam" id="PF03550">
    <property type="entry name" value="LolB"/>
    <property type="match status" value="1"/>
</dbReference>
<dbReference type="SUPFAM" id="SSF89392">
    <property type="entry name" value="Prokaryotic lipoproteins and lipoprotein localization factors"/>
    <property type="match status" value="1"/>
</dbReference>
<dbReference type="PROSITE" id="PS51257">
    <property type="entry name" value="PROKAR_LIPOPROTEIN"/>
    <property type="match status" value="1"/>
</dbReference>
<protein>
    <recommendedName>
        <fullName evidence="1">Outer-membrane lipoprotein LolB</fullName>
    </recommendedName>
</protein>
<gene>
    <name evidence="1" type="primary">lolB</name>
    <name type="ordered locus">ECS88_1277</name>
</gene>
<reference key="1">
    <citation type="journal article" date="2009" name="PLoS Genet.">
        <title>Organised genome dynamics in the Escherichia coli species results in highly diverse adaptive paths.</title>
        <authorList>
            <person name="Touchon M."/>
            <person name="Hoede C."/>
            <person name="Tenaillon O."/>
            <person name="Barbe V."/>
            <person name="Baeriswyl S."/>
            <person name="Bidet P."/>
            <person name="Bingen E."/>
            <person name="Bonacorsi S."/>
            <person name="Bouchier C."/>
            <person name="Bouvet O."/>
            <person name="Calteau A."/>
            <person name="Chiapello H."/>
            <person name="Clermont O."/>
            <person name="Cruveiller S."/>
            <person name="Danchin A."/>
            <person name="Diard M."/>
            <person name="Dossat C."/>
            <person name="Karoui M.E."/>
            <person name="Frapy E."/>
            <person name="Garry L."/>
            <person name="Ghigo J.M."/>
            <person name="Gilles A.M."/>
            <person name="Johnson J."/>
            <person name="Le Bouguenec C."/>
            <person name="Lescat M."/>
            <person name="Mangenot S."/>
            <person name="Martinez-Jehanne V."/>
            <person name="Matic I."/>
            <person name="Nassif X."/>
            <person name="Oztas S."/>
            <person name="Petit M.A."/>
            <person name="Pichon C."/>
            <person name="Rouy Z."/>
            <person name="Ruf C.S."/>
            <person name="Schneider D."/>
            <person name="Tourret J."/>
            <person name="Vacherie B."/>
            <person name="Vallenet D."/>
            <person name="Medigue C."/>
            <person name="Rocha E.P.C."/>
            <person name="Denamur E."/>
        </authorList>
    </citation>
    <scope>NUCLEOTIDE SEQUENCE [LARGE SCALE GENOMIC DNA]</scope>
    <source>
        <strain>S88 / ExPEC</strain>
    </source>
</reference>